<accession>A0RL90</accession>
<name>NUOB_BACAH</name>
<reference key="1">
    <citation type="journal article" date="2007" name="J. Bacteriol.">
        <title>The complete genome sequence of Bacillus thuringiensis Al Hakam.</title>
        <authorList>
            <person name="Challacombe J.F."/>
            <person name="Altherr M.R."/>
            <person name="Xie G."/>
            <person name="Bhotika S.S."/>
            <person name="Brown N."/>
            <person name="Bruce D."/>
            <person name="Campbell C.S."/>
            <person name="Campbell M.L."/>
            <person name="Chen J."/>
            <person name="Chertkov O."/>
            <person name="Cleland C."/>
            <person name="Dimitrijevic M."/>
            <person name="Doggett N.A."/>
            <person name="Fawcett J.J."/>
            <person name="Glavina T."/>
            <person name="Goodwin L.A."/>
            <person name="Green L.D."/>
            <person name="Han C.S."/>
            <person name="Hill K.K."/>
            <person name="Hitchcock P."/>
            <person name="Jackson P.J."/>
            <person name="Keim P."/>
            <person name="Kewalramani A.R."/>
            <person name="Longmire J."/>
            <person name="Lucas S."/>
            <person name="Malfatti S."/>
            <person name="Martinez D."/>
            <person name="McMurry K."/>
            <person name="Meincke L.J."/>
            <person name="Misra M."/>
            <person name="Moseman B.L."/>
            <person name="Mundt M."/>
            <person name="Munk A.C."/>
            <person name="Okinaka R.T."/>
            <person name="Parson-Quintana B."/>
            <person name="Reilly L.P."/>
            <person name="Richardson P."/>
            <person name="Robinson D.L."/>
            <person name="Saunders E."/>
            <person name="Tapia R."/>
            <person name="Tesmer J.G."/>
            <person name="Thayer N."/>
            <person name="Thompson L.S."/>
            <person name="Tice H."/>
            <person name="Ticknor L.O."/>
            <person name="Wills P.L."/>
            <person name="Gilna P."/>
            <person name="Brettin T.S."/>
        </authorList>
    </citation>
    <scope>NUCLEOTIDE SEQUENCE [LARGE SCALE GENOMIC DNA]</scope>
    <source>
        <strain>Al Hakam</strain>
    </source>
</reference>
<proteinExistence type="inferred from homology"/>
<sequence>MEKEGVTMVINFEELHPNERAELERNIFFSTLEQLKGWARSNSLWPMTFGLACCAIEMMGVGSSHYDLDRFGSFFRTSPRQSDVMIVSGTVTKKMAPIVRRLYDQMPEPKWVIAMGSCATAGGPYVNSYAVVKGVDQIVPVDVYIPGCPPNPAALIYGINKLKEKIRYEAKTGKQVTNK</sequence>
<organism>
    <name type="scientific">Bacillus thuringiensis (strain Al Hakam)</name>
    <dbReference type="NCBI Taxonomy" id="412694"/>
    <lineage>
        <taxon>Bacteria</taxon>
        <taxon>Bacillati</taxon>
        <taxon>Bacillota</taxon>
        <taxon>Bacilli</taxon>
        <taxon>Bacillales</taxon>
        <taxon>Bacillaceae</taxon>
        <taxon>Bacillus</taxon>
        <taxon>Bacillus cereus group</taxon>
    </lineage>
</organism>
<keyword id="KW-0004">4Fe-4S</keyword>
<keyword id="KW-1003">Cell membrane</keyword>
<keyword id="KW-0408">Iron</keyword>
<keyword id="KW-0411">Iron-sulfur</keyword>
<keyword id="KW-0472">Membrane</keyword>
<keyword id="KW-0479">Metal-binding</keyword>
<keyword id="KW-0520">NAD</keyword>
<keyword id="KW-0874">Quinone</keyword>
<keyword id="KW-1278">Translocase</keyword>
<keyword id="KW-0813">Transport</keyword>
<evidence type="ECO:0000255" key="1">
    <source>
        <dbReference type="HAMAP-Rule" id="MF_01356"/>
    </source>
</evidence>
<protein>
    <recommendedName>
        <fullName evidence="1">NADH-quinone oxidoreductase subunit B</fullName>
        <ecNumber evidence="1">7.1.1.-</ecNumber>
    </recommendedName>
    <alternativeName>
        <fullName evidence="1">NADH dehydrogenase I subunit B</fullName>
    </alternativeName>
    <alternativeName>
        <fullName evidence="1">NDH-1 subunit B</fullName>
    </alternativeName>
</protein>
<feature type="chain" id="PRO_0000376137" description="NADH-quinone oxidoreductase subunit B">
    <location>
        <begin position="1"/>
        <end position="179"/>
    </location>
</feature>
<feature type="binding site" evidence="1">
    <location>
        <position position="53"/>
    </location>
    <ligand>
        <name>[4Fe-4S] cluster</name>
        <dbReference type="ChEBI" id="CHEBI:49883"/>
    </ligand>
</feature>
<feature type="binding site" evidence="1">
    <location>
        <position position="54"/>
    </location>
    <ligand>
        <name>[4Fe-4S] cluster</name>
        <dbReference type="ChEBI" id="CHEBI:49883"/>
    </ligand>
</feature>
<feature type="binding site" evidence="1">
    <location>
        <position position="118"/>
    </location>
    <ligand>
        <name>[4Fe-4S] cluster</name>
        <dbReference type="ChEBI" id="CHEBI:49883"/>
    </ligand>
</feature>
<feature type="binding site" evidence="1">
    <location>
        <position position="148"/>
    </location>
    <ligand>
        <name>[4Fe-4S] cluster</name>
        <dbReference type="ChEBI" id="CHEBI:49883"/>
    </ligand>
</feature>
<dbReference type="EC" id="7.1.1.-" evidence="1"/>
<dbReference type="EMBL" id="CP000485">
    <property type="protein sequence ID" value="ABK87983.1"/>
    <property type="molecule type" value="Genomic_DNA"/>
</dbReference>
<dbReference type="SMR" id="A0RL90"/>
<dbReference type="KEGG" id="btl:BALH_4802"/>
<dbReference type="HOGENOM" id="CLU_055737_7_3_9"/>
<dbReference type="GO" id="GO:0005886">
    <property type="term" value="C:plasma membrane"/>
    <property type="evidence" value="ECO:0007669"/>
    <property type="project" value="UniProtKB-SubCell"/>
</dbReference>
<dbReference type="GO" id="GO:0045271">
    <property type="term" value="C:respiratory chain complex I"/>
    <property type="evidence" value="ECO:0007669"/>
    <property type="project" value="TreeGrafter"/>
</dbReference>
<dbReference type="GO" id="GO:0051539">
    <property type="term" value="F:4 iron, 4 sulfur cluster binding"/>
    <property type="evidence" value="ECO:0007669"/>
    <property type="project" value="UniProtKB-KW"/>
</dbReference>
<dbReference type="GO" id="GO:0005506">
    <property type="term" value="F:iron ion binding"/>
    <property type="evidence" value="ECO:0007669"/>
    <property type="project" value="UniProtKB-UniRule"/>
</dbReference>
<dbReference type="GO" id="GO:0008137">
    <property type="term" value="F:NADH dehydrogenase (ubiquinone) activity"/>
    <property type="evidence" value="ECO:0007669"/>
    <property type="project" value="InterPro"/>
</dbReference>
<dbReference type="GO" id="GO:0050136">
    <property type="term" value="F:NADH:ubiquinone reductase (non-electrogenic) activity"/>
    <property type="evidence" value="ECO:0007669"/>
    <property type="project" value="UniProtKB-UniRule"/>
</dbReference>
<dbReference type="GO" id="GO:0048038">
    <property type="term" value="F:quinone binding"/>
    <property type="evidence" value="ECO:0007669"/>
    <property type="project" value="UniProtKB-KW"/>
</dbReference>
<dbReference type="GO" id="GO:0009060">
    <property type="term" value="P:aerobic respiration"/>
    <property type="evidence" value="ECO:0007669"/>
    <property type="project" value="TreeGrafter"/>
</dbReference>
<dbReference type="GO" id="GO:0015990">
    <property type="term" value="P:electron transport coupled proton transport"/>
    <property type="evidence" value="ECO:0007669"/>
    <property type="project" value="TreeGrafter"/>
</dbReference>
<dbReference type="FunFam" id="3.40.50.12280:FF:000002">
    <property type="entry name" value="NADH-quinone oxidoreductase subunit B"/>
    <property type="match status" value="1"/>
</dbReference>
<dbReference type="Gene3D" id="3.40.50.12280">
    <property type="match status" value="1"/>
</dbReference>
<dbReference type="HAMAP" id="MF_01356">
    <property type="entry name" value="NDH1_NuoB"/>
    <property type="match status" value="1"/>
</dbReference>
<dbReference type="InterPro" id="IPR006137">
    <property type="entry name" value="NADH_UbQ_OxRdtase-like_20kDa"/>
</dbReference>
<dbReference type="InterPro" id="IPR006138">
    <property type="entry name" value="NADH_UQ_OxRdtase_20Kd_su"/>
</dbReference>
<dbReference type="NCBIfam" id="TIGR01957">
    <property type="entry name" value="nuoB_fam"/>
    <property type="match status" value="1"/>
</dbReference>
<dbReference type="NCBIfam" id="NF005012">
    <property type="entry name" value="PRK06411.1"/>
    <property type="match status" value="1"/>
</dbReference>
<dbReference type="PANTHER" id="PTHR11995">
    <property type="entry name" value="NADH DEHYDROGENASE"/>
    <property type="match status" value="1"/>
</dbReference>
<dbReference type="PANTHER" id="PTHR11995:SF14">
    <property type="entry name" value="NADH DEHYDROGENASE [UBIQUINONE] IRON-SULFUR PROTEIN 7, MITOCHONDRIAL"/>
    <property type="match status" value="1"/>
</dbReference>
<dbReference type="Pfam" id="PF01058">
    <property type="entry name" value="Oxidored_q6"/>
    <property type="match status" value="1"/>
</dbReference>
<dbReference type="SUPFAM" id="SSF56770">
    <property type="entry name" value="HydA/Nqo6-like"/>
    <property type="match status" value="1"/>
</dbReference>
<gene>
    <name evidence="1" type="primary">nuoB</name>
    <name type="ordered locus">BALH_4802</name>
</gene>
<comment type="function">
    <text evidence="1">NDH-1 shuttles electrons from NADH, via FMN and iron-sulfur (Fe-S) centers, to quinones in the respiratory chain. The immediate electron acceptor for the enzyme in this species is believed to be a menaquinone. Couples the redox reaction to proton translocation (for every two electrons transferred, four hydrogen ions are translocated across the cytoplasmic membrane), and thus conserves the redox energy in a proton gradient.</text>
</comment>
<comment type="catalytic activity">
    <reaction evidence="1">
        <text>a quinone + NADH + 5 H(+)(in) = a quinol + NAD(+) + 4 H(+)(out)</text>
        <dbReference type="Rhea" id="RHEA:57888"/>
        <dbReference type="ChEBI" id="CHEBI:15378"/>
        <dbReference type="ChEBI" id="CHEBI:24646"/>
        <dbReference type="ChEBI" id="CHEBI:57540"/>
        <dbReference type="ChEBI" id="CHEBI:57945"/>
        <dbReference type="ChEBI" id="CHEBI:132124"/>
    </reaction>
</comment>
<comment type="cofactor">
    <cofactor evidence="1">
        <name>[4Fe-4S] cluster</name>
        <dbReference type="ChEBI" id="CHEBI:49883"/>
    </cofactor>
    <text evidence="1">Binds 1 [4Fe-4S] cluster.</text>
</comment>
<comment type="subunit">
    <text evidence="1">NDH-1 is composed of 14 different subunits. Subunits NuoB, C, D, E, F, and G constitute the peripheral sector of the complex.</text>
</comment>
<comment type="subcellular location">
    <subcellularLocation>
        <location evidence="1">Cell membrane</location>
        <topology evidence="1">Peripheral membrane protein</topology>
        <orientation evidence="1">Cytoplasmic side</orientation>
    </subcellularLocation>
</comment>
<comment type="similarity">
    <text evidence="1">Belongs to the complex I 20 kDa subunit family.</text>
</comment>